<protein>
    <recommendedName>
        <fullName evidence="1">Cell division protein ZipA</fullName>
    </recommendedName>
</protein>
<reference key="1">
    <citation type="journal article" date="2005" name="J. Bacteriol.">
        <title>Insights into genome plasticity and pathogenicity of the plant pathogenic Bacterium Xanthomonas campestris pv. vesicatoria revealed by the complete genome sequence.</title>
        <authorList>
            <person name="Thieme F."/>
            <person name="Koebnik R."/>
            <person name="Bekel T."/>
            <person name="Berger C."/>
            <person name="Boch J."/>
            <person name="Buettner D."/>
            <person name="Caldana C."/>
            <person name="Gaigalat L."/>
            <person name="Goesmann A."/>
            <person name="Kay S."/>
            <person name="Kirchner O."/>
            <person name="Lanz C."/>
            <person name="Linke B."/>
            <person name="McHardy A.C."/>
            <person name="Meyer F."/>
            <person name="Mittenhuber G."/>
            <person name="Nies D.H."/>
            <person name="Niesbach-Kloesgen U."/>
            <person name="Patschkowski T."/>
            <person name="Rueckert C."/>
            <person name="Rupp O."/>
            <person name="Schneiker S."/>
            <person name="Schuster S.C."/>
            <person name="Vorhoelter F.J."/>
            <person name="Weber E."/>
            <person name="Puehler A."/>
            <person name="Bonas U."/>
            <person name="Bartels D."/>
            <person name="Kaiser O."/>
        </authorList>
    </citation>
    <scope>NUCLEOTIDE SEQUENCE [LARGE SCALE GENOMIC DNA]</scope>
    <source>
        <strain>85-10</strain>
    </source>
</reference>
<name>ZIPA_XANE5</name>
<feature type="chain" id="PRO_0000237141" description="Cell division protein ZipA">
    <location>
        <begin position="1"/>
        <end position="243"/>
    </location>
</feature>
<feature type="topological domain" description="Periplasmic" evidence="1">
    <location>
        <begin position="1"/>
        <end position="4"/>
    </location>
</feature>
<feature type="transmembrane region" description="Helical" evidence="1">
    <location>
        <begin position="5"/>
        <end position="25"/>
    </location>
</feature>
<feature type="topological domain" description="Cytoplasmic" evidence="1">
    <location>
        <begin position="26"/>
        <end position="243"/>
    </location>
</feature>
<feature type="region of interest" description="Disordered" evidence="2">
    <location>
        <begin position="30"/>
        <end position="89"/>
    </location>
</feature>
<feature type="compositionally biased region" description="Basic and acidic residues" evidence="2">
    <location>
        <begin position="35"/>
        <end position="50"/>
    </location>
</feature>
<dbReference type="EMBL" id="AM039952">
    <property type="protein sequence ID" value="CAJ23342.1"/>
    <property type="molecule type" value="Genomic_DNA"/>
</dbReference>
<dbReference type="RefSeq" id="WP_011347027.1">
    <property type="nucleotide sequence ID" value="NZ_CP017190.1"/>
</dbReference>
<dbReference type="SMR" id="Q3BV17"/>
<dbReference type="STRING" id="456327.BJD11_14255"/>
<dbReference type="KEGG" id="xcv:XCV1665"/>
<dbReference type="eggNOG" id="COG3115">
    <property type="taxonomic scope" value="Bacteria"/>
</dbReference>
<dbReference type="HOGENOM" id="CLU_030174_2_1_6"/>
<dbReference type="Proteomes" id="UP000007069">
    <property type="component" value="Chromosome"/>
</dbReference>
<dbReference type="GO" id="GO:0032153">
    <property type="term" value="C:cell division site"/>
    <property type="evidence" value="ECO:0007669"/>
    <property type="project" value="UniProtKB-UniRule"/>
</dbReference>
<dbReference type="GO" id="GO:0005886">
    <property type="term" value="C:plasma membrane"/>
    <property type="evidence" value="ECO:0007669"/>
    <property type="project" value="UniProtKB-SubCell"/>
</dbReference>
<dbReference type="GO" id="GO:0000917">
    <property type="term" value="P:division septum assembly"/>
    <property type="evidence" value="ECO:0007669"/>
    <property type="project" value="TreeGrafter"/>
</dbReference>
<dbReference type="GO" id="GO:0043093">
    <property type="term" value="P:FtsZ-dependent cytokinesis"/>
    <property type="evidence" value="ECO:0007669"/>
    <property type="project" value="UniProtKB-UniRule"/>
</dbReference>
<dbReference type="FunFam" id="3.30.1400.10:FF:000003">
    <property type="entry name" value="Cell division protein ZipA"/>
    <property type="match status" value="1"/>
</dbReference>
<dbReference type="Gene3D" id="3.30.1400.10">
    <property type="entry name" value="ZipA, C-terminal FtsZ-binding domain"/>
    <property type="match status" value="1"/>
</dbReference>
<dbReference type="HAMAP" id="MF_00509">
    <property type="entry name" value="ZipA"/>
    <property type="match status" value="1"/>
</dbReference>
<dbReference type="InterPro" id="IPR011919">
    <property type="entry name" value="Cell_div_ZipA"/>
</dbReference>
<dbReference type="InterPro" id="IPR007449">
    <property type="entry name" value="ZipA_FtsZ-bd_C"/>
</dbReference>
<dbReference type="InterPro" id="IPR036765">
    <property type="entry name" value="ZipA_FtsZ-bd_C_sf"/>
</dbReference>
<dbReference type="NCBIfam" id="TIGR02205">
    <property type="entry name" value="septum_zipA"/>
    <property type="match status" value="1"/>
</dbReference>
<dbReference type="PANTHER" id="PTHR38685">
    <property type="entry name" value="CELL DIVISION PROTEIN ZIPA"/>
    <property type="match status" value="1"/>
</dbReference>
<dbReference type="PANTHER" id="PTHR38685:SF1">
    <property type="entry name" value="CELL DIVISION PROTEIN ZIPA"/>
    <property type="match status" value="1"/>
</dbReference>
<dbReference type="Pfam" id="PF04354">
    <property type="entry name" value="ZipA_C"/>
    <property type="match status" value="1"/>
</dbReference>
<dbReference type="SMART" id="SM00771">
    <property type="entry name" value="ZipA_C"/>
    <property type="match status" value="1"/>
</dbReference>
<dbReference type="SUPFAM" id="SSF64383">
    <property type="entry name" value="Cell-division protein ZipA, C-terminal domain"/>
    <property type="match status" value="1"/>
</dbReference>
<comment type="function">
    <text evidence="1">Essential cell division protein that stabilizes the FtsZ protofilaments by cross-linking them and that serves as a cytoplasmic membrane anchor for the Z ring. Also required for the recruitment to the septal ring of downstream cell division proteins.</text>
</comment>
<comment type="subunit">
    <text evidence="1">Interacts with FtsZ via their C-terminal domains.</text>
</comment>
<comment type="subcellular location">
    <subcellularLocation>
        <location evidence="1">Cell inner membrane</location>
        <topology evidence="1">Single-pass type I membrane protein</topology>
    </subcellularLocation>
    <text evidence="1">Localizes to the Z ring in an FtsZ-dependent manner.</text>
</comment>
<comment type="similarity">
    <text evidence="1">Belongs to the ZipA family.</text>
</comment>
<organism>
    <name type="scientific">Xanthomonas euvesicatoria pv. vesicatoria (strain 85-10)</name>
    <name type="common">Xanthomonas campestris pv. vesicatoria</name>
    <dbReference type="NCBI Taxonomy" id="316273"/>
    <lineage>
        <taxon>Bacteria</taxon>
        <taxon>Pseudomonadati</taxon>
        <taxon>Pseudomonadota</taxon>
        <taxon>Gammaproteobacteria</taxon>
        <taxon>Lysobacterales</taxon>
        <taxon>Lysobacteraceae</taxon>
        <taxon>Xanthomonas</taxon>
    </lineage>
</organism>
<accession>Q3BV17</accession>
<sequence length="243" mass="26878">MSDMAMIRIGILIAGLLLVAAIFLFGRPKKSPQGRRVDKDEGQPRERREPVISSEFGVEDDAAERAEGVEQSELNLEGQDASGGNEVGKRPNQDFDKIVSLFVAAKAGQVLRGEDVVVAAEKTGLVFGHMNVFHRLVEGHPERGPIFSMASILKPGSFDMANIREMQTPAIAFFLTLPAPMTALDAWEKMLPTVQRMAELLDGVVLDDSRNALGRQRVAHIRDELRAYDRQHQAPPLTKSPRW</sequence>
<proteinExistence type="inferred from homology"/>
<keyword id="KW-0131">Cell cycle</keyword>
<keyword id="KW-0132">Cell division</keyword>
<keyword id="KW-0997">Cell inner membrane</keyword>
<keyword id="KW-1003">Cell membrane</keyword>
<keyword id="KW-0472">Membrane</keyword>
<keyword id="KW-0812">Transmembrane</keyword>
<keyword id="KW-1133">Transmembrane helix</keyword>
<gene>
    <name evidence="1" type="primary">zipA</name>
    <name type="ordered locus">XCV1665</name>
</gene>
<evidence type="ECO:0000255" key="1">
    <source>
        <dbReference type="HAMAP-Rule" id="MF_00509"/>
    </source>
</evidence>
<evidence type="ECO:0000256" key="2">
    <source>
        <dbReference type="SAM" id="MobiDB-lite"/>
    </source>
</evidence>